<gene>
    <name type="primary">Tbxas1</name>
    <name type="synonym">Cyp5</name>
    <name type="synonym">Cyp5a1</name>
</gene>
<keyword id="KW-0256">Endoplasmic reticulum</keyword>
<keyword id="KW-0275">Fatty acid biosynthesis</keyword>
<keyword id="KW-0276">Fatty acid metabolism</keyword>
<keyword id="KW-0349">Heme</keyword>
<keyword id="KW-0408">Iron</keyword>
<keyword id="KW-0413">Isomerase</keyword>
<keyword id="KW-0444">Lipid biosynthesis</keyword>
<keyword id="KW-0443">Lipid metabolism</keyword>
<keyword id="KW-0456">Lyase</keyword>
<keyword id="KW-0472">Membrane</keyword>
<keyword id="KW-0479">Metal-binding</keyword>
<keyword id="KW-0503">Monooxygenase</keyword>
<keyword id="KW-0560">Oxidoreductase</keyword>
<keyword id="KW-0643">Prostaglandin biosynthesis</keyword>
<keyword id="KW-0644">Prostaglandin metabolism</keyword>
<keyword id="KW-1185">Reference proteome</keyword>
<keyword id="KW-0812">Transmembrane</keyword>
<keyword id="KW-1133">Transmembrane helix</keyword>
<feature type="chain" id="PRO_0000052257" description="Thromboxane-A synthase">
    <location>
        <begin position="1"/>
        <end position="533"/>
    </location>
</feature>
<feature type="topological domain" description="Cytoplasmic" evidence="3">
    <location>
        <begin position="1"/>
        <end position="10"/>
    </location>
</feature>
<feature type="transmembrane region" description="Helical" evidence="4">
    <location>
        <begin position="11"/>
        <end position="31"/>
    </location>
</feature>
<feature type="topological domain" description="Lumenal" evidence="3">
    <location>
        <begin position="32"/>
        <end position="75"/>
    </location>
</feature>
<feature type="transmembrane region" description="Helical" evidence="4">
    <location>
        <begin position="76"/>
        <end position="96"/>
    </location>
</feature>
<feature type="topological domain" description="Cytoplasmic" evidence="3">
    <location>
        <begin position="97"/>
        <end position="223"/>
    </location>
</feature>
<feature type="transmembrane region" description="Helical" evidence="4">
    <location>
        <begin position="224"/>
        <end position="244"/>
    </location>
</feature>
<feature type="topological domain" description="Lumenal" evidence="3">
    <location>
        <begin position="245"/>
        <end position="335"/>
    </location>
</feature>
<feature type="transmembrane region" description="Helical" evidence="4">
    <location>
        <begin position="336"/>
        <end position="356"/>
    </location>
</feature>
<feature type="topological domain" description="Cytoplasmic" evidence="3">
    <location>
        <begin position="357"/>
        <end position="533"/>
    </location>
</feature>
<feature type="binding site" description="axial binding residue" evidence="2">
    <location>
        <position position="479"/>
    </location>
    <ligand>
        <name>heme</name>
        <dbReference type="ChEBI" id="CHEBI:30413"/>
    </ligand>
    <ligandPart>
        <name>Fe</name>
        <dbReference type="ChEBI" id="CHEBI:18248"/>
    </ligandPart>
</feature>
<feature type="sequence conflict" description="In Ref. 3; AAB87704." evidence="7" ref="3">
    <original>LCGYYLGRRMH</original>
    <variation>SVWVLSWPSID</variation>
    <location>
        <begin position="77"/>
        <end position="87"/>
    </location>
</feature>
<protein>
    <recommendedName>
        <fullName>Thromboxane-A synthase</fullName>
        <shortName>TS</shortName>
        <shortName>TXA synthase</shortName>
        <shortName>TXS</shortName>
        <ecNumber evidence="6">5.3.99.5</ecNumber>
    </recommendedName>
    <alternativeName>
        <fullName>Cytochrome P450 5A1</fullName>
    </alternativeName>
    <alternativeName>
        <fullName>Hydroperoxy icosatetraenoate dehydratase</fullName>
        <ecNumber evidence="3">4.2.1.152</ecNumber>
    </alternativeName>
</protein>
<organism>
    <name type="scientific">Mus musculus</name>
    <name type="common">Mouse</name>
    <dbReference type="NCBI Taxonomy" id="10090"/>
    <lineage>
        <taxon>Eukaryota</taxon>
        <taxon>Metazoa</taxon>
        <taxon>Chordata</taxon>
        <taxon>Craniata</taxon>
        <taxon>Vertebrata</taxon>
        <taxon>Euteleostomi</taxon>
        <taxon>Mammalia</taxon>
        <taxon>Eutheria</taxon>
        <taxon>Euarchontoglires</taxon>
        <taxon>Glires</taxon>
        <taxon>Rodentia</taxon>
        <taxon>Myomorpha</taxon>
        <taxon>Muroidea</taxon>
        <taxon>Muridae</taxon>
        <taxon>Murinae</taxon>
        <taxon>Mus</taxon>
        <taxon>Mus</taxon>
    </lineage>
</organism>
<accession>P36423</accession>
<accession>P97505</accession>
<sequence>MEVLGLLKFEVSGTIVTVTLLVALLALLKWYSMSAFSRLEKLGIRHPKPSPFVGNLMFFRQGFWESQLELRERYGPLCGYYLGRRMHVVISEPDMIKQVLVENFSNFSNRMASGLEPKMVADSVLLLRDRRWEEVRGALMSSFSPEKLDEMTPLISQACELLVAHLKRYAASRDAFNIQRCYCCYTIDVVASVAFGTQVDSQNSPEDPFVQHCRRASTFCIPRPLLVLILSFPSIMVPLARILPNKNRDELNGFFNTLIRNVIALRDQQAAEERRRDFLQMVLDAQHSMNSVGVEGFDMVPESLSSSECTKEPPQRCHPTSTSKPFTVDEIVGQAFLFLIAGHEVITNTLSFITYLLATHPDCQERLLKEVDLFMGKHPAPEYHSLQEGLPYLDMVISETLRMYPPAFRFTREAAQDCEVLGQRIPAGTVLEIAVGALHHDPEHWPNPETFDPERFTAEARLQRRPFTYLPFGAGPRSCLGVRLGLLVVKLTILQVLHKFRFEASPETQVPLQLESKSALGPKNGVYIKIVSR</sequence>
<evidence type="ECO:0000250" key="1"/>
<evidence type="ECO:0000250" key="2">
    <source>
        <dbReference type="UniProtKB" id="P14779"/>
    </source>
</evidence>
<evidence type="ECO:0000250" key="3">
    <source>
        <dbReference type="UniProtKB" id="P24557"/>
    </source>
</evidence>
<evidence type="ECO:0000255" key="4"/>
<evidence type="ECO:0000269" key="5">
    <source>
    </source>
</evidence>
<evidence type="ECO:0000269" key="6">
    <source>
    </source>
</evidence>
<evidence type="ECO:0000305" key="7"/>
<dbReference type="EC" id="5.3.99.5" evidence="6"/>
<dbReference type="EC" id="4.2.1.152" evidence="3"/>
<dbReference type="EMBL" id="L18868">
    <property type="protein sequence ID" value="AAB39850.1"/>
    <property type="molecule type" value="mRNA"/>
</dbReference>
<dbReference type="EMBL" id="U41397">
    <property type="protein sequence ID" value="AAB87704.1"/>
    <property type="molecule type" value="Genomic_DNA"/>
</dbReference>
<dbReference type="EMBL" id="U41326">
    <property type="protein sequence ID" value="AAB87704.1"/>
    <property type="status" value="JOINED"/>
    <property type="molecule type" value="Genomic_DNA"/>
</dbReference>
<dbReference type="EMBL" id="U41327">
    <property type="protein sequence ID" value="AAB87704.1"/>
    <property type="status" value="JOINED"/>
    <property type="molecule type" value="Genomic_DNA"/>
</dbReference>
<dbReference type="EMBL" id="U41328">
    <property type="protein sequence ID" value="AAB87704.1"/>
    <property type="status" value="JOINED"/>
    <property type="molecule type" value="Genomic_DNA"/>
</dbReference>
<dbReference type="EMBL" id="U41329">
    <property type="protein sequence ID" value="AAB87704.1"/>
    <property type="status" value="JOINED"/>
    <property type="molecule type" value="Genomic_DNA"/>
</dbReference>
<dbReference type="EMBL" id="U41330">
    <property type="protein sequence ID" value="AAB87704.1"/>
    <property type="status" value="JOINED"/>
    <property type="molecule type" value="Genomic_DNA"/>
</dbReference>
<dbReference type="EMBL" id="U41331">
    <property type="protein sequence ID" value="AAB87704.1"/>
    <property type="status" value="JOINED"/>
    <property type="molecule type" value="Genomic_DNA"/>
</dbReference>
<dbReference type="EMBL" id="U41332">
    <property type="protein sequence ID" value="AAB87704.1"/>
    <property type="status" value="JOINED"/>
    <property type="molecule type" value="Genomic_DNA"/>
</dbReference>
<dbReference type="EMBL" id="U41333">
    <property type="protein sequence ID" value="AAB87704.1"/>
    <property type="status" value="JOINED"/>
    <property type="molecule type" value="Genomic_DNA"/>
</dbReference>
<dbReference type="EMBL" id="U41334">
    <property type="protein sequence ID" value="AAB87704.1"/>
    <property type="status" value="JOINED"/>
    <property type="molecule type" value="Genomic_DNA"/>
</dbReference>
<dbReference type="EMBL" id="U41335">
    <property type="protein sequence ID" value="AAB87704.1"/>
    <property type="status" value="JOINED"/>
    <property type="molecule type" value="Genomic_DNA"/>
</dbReference>
<dbReference type="EMBL" id="U41336">
    <property type="protein sequence ID" value="AAB87704.1"/>
    <property type="status" value="JOINED"/>
    <property type="molecule type" value="Genomic_DNA"/>
</dbReference>
<dbReference type="CCDS" id="CCDS20018.1"/>
<dbReference type="PIR" id="JN0683">
    <property type="entry name" value="JN0683"/>
</dbReference>
<dbReference type="RefSeq" id="NP_035669.3">
    <property type="nucleotide sequence ID" value="NM_011539.3"/>
</dbReference>
<dbReference type="RefSeq" id="XP_011239582.1">
    <property type="nucleotide sequence ID" value="XM_011241280.4"/>
</dbReference>
<dbReference type="RefSeq" id="XP_017176988.1">
    <property type="nucleotide sequence ID" value="XM_017321499.3"/>
</dbReference>
<dbReference type="RefSeq" id="XP_017176989.1">
    <property type="nucleotide sequence ID" value="XM_017321500.3"/>
</dbReference>
<dbReference type="SMR" id="P36423"/>
<dbReference type="FunCoup" id="P36423">
    <property type="interactions" value="1230"/>
</dbReference>
<dbReference type="STRING" id="10090.ENSMUSP00000003017"/>
<dbReference type="BindingDB" id="P36423"/>
<dbReference type="iPTMnet" id="P36423"/>
<dbReference type="PhosphoSitePlus" id="P36423"/>
<dbReference type="PaxDb" id="10090-ENSMUSP00000003017"/>
<dbReference type="ProteomicsDB" id="262808"/>
<dbReference type="Antibodypedia" id="18246">
    <property type="antibodies" value="476 antibodies from 33 providers"/>
</dbReference>
<dbReference type="DNASU" id="21391"/>
<dbReference type="Ensembl" id="ENSMUST00000003017.13">
    <property type="protein sequence ID" value="ENSMUSP00000003017.7"/>
    <property type="gene ID" value="ENSMUSG00000029925.14"/>
</dbReference>
<dbReference type="GeneID" id="21391"/>
<dbReference type="KEGG" id="mmu:21391"/>
<dbReference type="UCSC" id="uc009bld.1">
    <property type="organism name" value="mouse"/>
</dbReference>
<dbReference type="AGR" id="MGI:98497"/>
<dbReference type="CTD" id="6916"/>
<dbReference type="MGI" id="MGI:98497">
    <property type="gene designation" value="Tbxas1"/>
</dbReference>
<dbReference type="VEuPathDB" id="HostDB:ENSMUSG00000029925"/>
<dbReference type="eggNOG" id="KOG0158">
    <property type="taxonomic scope" value="Eukaryota"/>
</dbReference>
<dbReference type="GeneTree" id="ENSGT00940000157903"/>
<dbReference type="HOGENOM" id="CLU_001570_5_2_1"/>
<dbReference type="InParanoid" id="P36423"/>
<dbReference type="OMA" id="WPHPETF"/>
<dbReference type="OrthoDB" id="1470350at2759"/>
<dbReference type="PhylomeDB" id="P36423"/>
<dbReference type="TreeFam" id="TF105087"/>
<dbReference type="Reactome" id="R-MMU-211979">
    <property type="pathway name" value="Eicosanoids"/>
</dbReference>
<dbReference type="Reactome" id="R-MMU-2162123">
    <property type="pathway name" value="Synthesis of Prostaglandins (PG) and Thromboxanes (TX)"/>
</dbReference>
<dbReference type="BioGRID-ORCS" id="21391">
    <property type="hits" value="2 hits in 79 CRISPR screens"/>
</dbReference>
<dbReference type="ChiTaRS" id="Tbxas1">
    <property type="organism name" value="mouse"/>
</dbReference>
<dbReference type="PRO" id="PR:P36423"/>
<dbReference type="Proteomes" id="UP000000589">
    <property type="component" value="Chromosome 6"/>
</dbReference>
<dbReference type="RNAct" id="P36423">
    <property type="molecule type" value="protein"/>
</dbReference>
<dbReference type="Bgee" id="ENSMUSG00000029925">
    <property type="expression patterns" value="Expressed in granulocyte and 118 other cell types or tissues"/>
</dbReference>
<dbReference type="ExpressionAtlas" id="P36423">
    <property type="expression patterns" value="baseline and differential"/>
</dbReference>
<dbReference type="GO" id="GO:0005829">
    <property type="term" value="C:cytosol"/>
    <property type="evidence" value="ECO:0007669"/>
    <property type="project" value="Ensembl"/>
</dbReference>
<dbReference type="GO" id="GO:0005789">
    <property type="term" value="C:endoplasmic reticulum membrane"/>
    <property type="evidence" value="ECO:0000250"/>
    <property type="project" value="UniProtKB"/>
</dbReference>
<dbReference type="GO" id="GO:0036134">
    <property type="term" value="F:12-hydroxyheptadecatrienoic acid synthase activity"/>
    <property type="evidence" value="ECO:0007669"/>
    <property type="project" value="RHEA"/>
</dbReference>
<dbReference type="GO" id="GO:0020037">
    <property type="term" value="F:heme binding"/>
    <property type="evidence" value="ECO:0000250"/>
    <property type="project" value="UniProtKB"/>
</dbReference>
<dbReference type="GO" id="GO:0106256">
    <property type="term" value="F:hydroperoxy icosatetraenoate dehydratase activity"/>
    <property type="evidence" value="ECO:0000250"/>
    <property type="project" value="UniProtKB"/>
</dbReference>
<dbReference type="GO" id="GO:0005506">
    <property type="term" value="F:iron ion binding"/>
    <property type="evidence" value="ECO:0007669"/>
    <property type="project" value="InterPro"/>
</dbReference>
<dbReference type="GO" id="GO:0004497">
    <property type="term" value="F:monooxygenase activity"/>
    <property type="evidence" value="ECO:0007669"/>
    <property type="project" value="UniProtKB-KW"/>
</dbReference>
<dbReference type="GO" id="GO:0016705">
    <property type="term" value="F:oxidoreductase activity, acting on paired donors, with incorporation or reduction of molecular oxygen"/>
    <property type="evidence" value="ECO:0007669"/>
    <property type="project" value="InterPro"/>
</dbReference>
<dbReference type="GO" id="GO:0004796">
    <property type="term" value="F:thromboxane-A synthase activity"/>
    <property type="evidence" value="ECO:0000315"/>
    <property type="project" value="MGI"/>
</dbReference>
<dbReference type="GO" id="GO:0006690">
    <property type="term" value="P:icosanoid metabolic process"/>
    <property type="evidence" value="ECO:0000250"/>
    <property type="project" value="UniProtKB"/>
</dbReference>
<dbReference type="GO" id="GO:0030644">
    <property type="term" value="P:intracellular chloride ion homeostasis"/>
    <property type="evidence" value="ECO:0007669"/>
    <property type="project" value="Ensembl"/>
</dbReference>
<dbReference type="GO" id="GO:0045907">
    <property type="term" value="P:positive regulation of vasoconstriction"/>
    <property type="evidence" value="ECO:0007669"/>
    <property type="project" value="Ensembl"/>
</dbReference>
<dbReference type="GO" id="GO:0001516">
    <property type="term" value="P:prostaglandin biosynthetic process"/>
    <property type="evidence" value="ECO:0000250"/>
    <property type="project" value="UniProtKB"/>
</dbReference>
<dbReference type="GO" id="GO:0045471">
    <property type="term" value="P:response to ethanol"/>
    <property type="evidence" value="ECO:0007669"/>
    <property type="project" value="Ensembl"/>
</dbReference>
<dbReference type="GO" id="GO:0070542">
    <property type="term" value="P:response to fatty acid"/>
    <property type="evidence" value="ECO:0007669"/>
    <property type="project" value="Ensembl"/>
</dbReference>
<dbReference type="FunFam" id="1.10.630.10:FF:000003">
    <property type="entry name" value="cytochrome P450 3A12-like isoform X2"/>
    <property type="match status" value="1"/>
</dbReference>
<dbReference type="Gene3D" id="1.10.630.10">
    <property type="entry name" value="Cytochrome P450"/>
    <property type="match status" value="1"/>
</dbReference>
<dbReference type="InterPro" id="IPR001128">
    <property type="entry name" value="Cyt_P450"/>
</dbReference>
<dbReference type="InterPro" id="IPR017972">
    <property type="entry name" value="Cyt_P450_CS"/>
</dbReference>
<dbReference type="InterPro" id="IPR002401">
    <property type="entry name" value="Cyt_P450_E_grp-I"/>
</dbReference>
<dbReference type="InterPro" id="IPR036396">
    <property type="entry name" value="Cyt_P450_sf"/>
</dbReference>
<dbReference type="InterPro" id="IPR050705">
    <property type="entry name" value="Cytochrome_P450_3A"/>
</dbReference>
<dbReference type="PANTHER" id="PTHR24302:SF47">
    <property type="entry name" value="CYTOCHROME P450"/>
    <property type="match status" value="1"/>
</dbReference>
<dbReference type="PANTHER" id="PTHR24302">
    <property type="entry name" value="CYTOCHROME P450 FAMILY 3"/>
    <property type="match status" value="1"/>
</dbReference>
<dbReference type="Pfam" id="PF00067">
    <property type="entry name" value="p450"/>
    <property type="match status" value="2"/>
</dbReference>
<dbReference type="PRINTS" id="PR00463">
    <property type="entry name" value="EP450I"/>
</dbReference>
<dbReference type="PRINTS" id="PR00385">
    <property type="entry name" value="P450"/>
</dbReference>
<dbReference type="SUPFAM" id="SSF48264">
    <property type="entry name" value="Cytochrome P450"/>
    <property type="match status" value="1"/>
</dbReference>
<dbReference type="PROSITE" id="PS00086">
    <property type="entry name" value="CYTOCHROME_P450"/>
    <property type="match status" value="1"/>
</dbReference>
<name>THAS_MOUSE</name>
<proteinExistence type="evidence at protein level"/>
<comment type="function">
    <text evidence="3">Catalyzes the conversion of prostaglandin H2 (PGH2) to thromboxane A2 (TXA2), a potent inducer of blood vessel constriction and platelet aggregation. Also cleaves PGH2 to 12-hydroxy-heptadecatrienoicacid (12-HHT) and malondialdehyde, which is known to act as a mediator of DNA damage. 12-HHT and malondialdehyde are formed stoichiometrically in the same amounts as TXA2. Additionally, displays dehydratase activity, toward (15S)-hydroperoxy-(5Z,8Z,11Z,13E)-eicosatetraenoate (15(S)-HPETE) producing 15-KETE and 15-HETE.</text>
</comment>
<comment type="catalytic activity">
    <reaction evidence="6">
        <text>prostaglandin H2 = thromboxane A2</text>
        <dbReference type="Rhea" id="RHEA:17137"/>
        <dbReference type="ChEBI" id="CHEBI:57405"/>
        <dbReference type="ChEBI" id="CHEBI:57445"/>
        <dbReference type="EC" id="5.3.99.5"/>
    </reaction>
    <physiologicalReaction direction="left-to-right" evidence="3">
        <dbReference type="Rhea" id="RHEA:17138"/>
    </physiologicalReaction>
</comment>
<comment type="catalytic activity">
    <reaction evidence="3">
        <text>prostaglandin H2 = (12S)-hydroxy-(5Z,8E,10E)-heptadecatrienoate + malonaldehyde</text>
        <dbReference type="Rhea" id="RHEA:48644"/>
        <dbReference type="ChEBI" id="CHEBI:57405"/>
        <dbReference type="ChEBI" id="CHEBI:90694"/>
        <dbReference type="ChEBI" id="CHEBI:566274"/>
    </reaction>
</comment>
<comment type="catalytic activity">
    <reaction evidence="3">
        <text>a hydroperoxyeicosatetraenoate = an oxoeicosatetraenoate + H2O</text>
        <dbReference type="Rhea" id="RHEA:55556"/>
        <dbReference type="ChEBI" id="CHEBI:15377"/>
        <dbReference type="ChEBI" id="CHEBI:59720"/>
        <dbReference type="ChEBI" id="CHEBI:131859"/>
        <dbReference type="EC" id="4.2.1.152"/>
    </reaction>
    <physiologicalReaction direction="left-to-right" evidence="3">
        <dbReference type="Rhea" id="RHEA:55557"/>
    </physiologicalReaction>
</comment>
<comment type="catalytic activity">
    <reaction evidence="3">
        <text>(15S)-hydroperoxy-(5Z,8Z,11Z,13E)-eicosatetraenoate = 15-oxo-(5Z,8Z,11Z,13E)-eicosatetraenoate + H2O</text>
        <dbReference type="Rhea" id="RHEA:48636"/>
        <dbReference type="ChEBI" id="CHEBI:15377"/>
        <dbReference type="ChEBI" id="CHEBI:57410"/>
        <dbReference type="ChEBI" id="CHEBI:57446"/>
    </reaction>
    <physiologicalReaction direction="left-to-right" evidence="3">
        <dbReference type="Rhea" id="RHEA:48637"/>
    </physiologicalReaction>
</comment>
<comment type="catalytic activity">
    <reaction evidence="3">
        <text>(15S)-hydroperoxy-(5Z,8Z,11Z,13E)-eicosatetraenoate + AH2 = (15S)-hydroxy-(5Z,8Z,11Z,13E)-eicosatetraenoate + A + H2O</text>
        <dbReference type="Rhea" id="RHEA:48856"/>
        <dbReference type="ChEBI" id="CHEBI:13193"/>
        <dbReference type="ChEBI" id="CHEBI:15377"/>
        <dbReference type="ChEBI" id="CHEBI:17499"/>
        <dbReference type="ChEBI" id="CHEBI:57409"/>
        <dbReference type="ChEBI" id="CHEBI:57446"/>
    </reaction>
    <physiologicalReaction direction="left-to-right" evidence="3">
        <dbReference type="Rhea" id="RHEA:48857"/>
    </physiologicalReaction>
</comment>
<comment type="cofactor">
    <cofactor evidence="3">
        <name>heme</name>
        <dbReference type="ChEBI" id="CHEBI:30413"/>
    </cofactor>
</comment>
<comment type="subunit">
    <text evidence="3">Monomer.</text>
</comment>
<comment type="subcellular location">
    <subcellularLocation>
        <location evidence="3">Endoplasmic reticulum membrane</location>
        <topology evidence="1">Multi-pass membrane protein</topology>
    </subcellularLocation>
</comment>
<comment type="tissue specificity">
    <text evidence="6">Expressed primarily in lung, kidney, and spleen.</text>
</comment>
<comment type="disruption phenotype">
    <text evidence="5">Deficient mice are viable, fertile and exhibited no gross abnormalities in size, body weight, and anatomical features of major organs. However deficency causes a mild hemostatic defect and protects mice against arachidonate-induced shock and death.</text>
</comment>
<comment type="similarity">
    <text evidence="7">Belongs to the cytochrome P450 family.</text>
</comment>
<reference key="1">
    <citation type="journal article" date="1993" name="Biochem. Biophys. Res. Commun.">
        <title>Molecular cloning and expression of murine thromboxane synthase.</title>
        <authorList>
            <person name="Zhang L."/>
            <person name="Chase M.B."/>
            <person name="Shen R.F."/>
        </authorList>
    </citation>
    <scope>NUCLEOTIDE SEQUENCE [MRNA]</scope>
    <scope>TISSUE SPECIFICITY</scope>
    <scope>CATALYTIC ACTIVITY</scope>
    <scope>FUNCTION</scope>
    <source>
        <strain>CD-1</strain>
        <tissue>Lung</tissue>
    </source>
</reference>
<reference key="2">
    <citation type="submission" date="1997-01" db="EMBL/GenBank/DDBJ databases">
        <authorList>
            <person name="Zhang L."/>
        </authorList>
    </citation>
    <scope>SEQUENCE REVISION</scope>
</reference>
<reference key="3">
    <citation type="journal article" date="1997" name="Genomics">
        <title>Genomic organization, chromosomal localization, and expression of the murine thromboxane synthase gene.</title>
        <authorList>
            <person name="Zhang L."/>
            <person name="Xiao H."/>
            <person name="Schultz R.A."/>
            <person name="Shen R.-F."/>
        </authorList>
    </citation>
    <scope>NUCLEOTIDE SEQUENCE [GENOMIC DNA]</scope>
    <source>
        <strain>129/Sv</strain>
    </source>
</reference>
<reference key="4">
    <citation type="journal article" date="2010" name="Cell">
        <title>A tissue-specific atlas of mouse protein phosphorylation and expression.</title>
        <authorList>
            <person name="Huttlin E.L."/>
            <person name="Jedrychowski M.P."/>
            <person name="Elias J.E."/>
            <person name="Goswami T."/>
            <person name="Rad R."/>
            <person name="Beausoleil S.A."/>
            <person name="Villen J."/>
            <person name="Haas W."/>
            <person name="Sowa M.E."/>
            <person name="Gygi S.P."/>
        </authorList>
    </citation>
    <scope>IDENTIFICATION BY MASS SPECTROMETRY [LARGE SCALE ANALYSIS]</scope>
    <source>
        <tissue>Lung</tissue>
        <tissue>Spleen</tissue>
    </source>
</reference>
<reference key="5">
    <citation type="journal article" date="2004" name="Blood">
        <title>TXAS-deleted mice exhibit normal thrombopoiesis, defective hemostasis, and resistance to arachidonate-induced death.</title>
        <authorList>
            <person name="Yu I.S."/>
            <person name="Lin S.R."/>
            <person name="Huang C.C."/>
            <person name="Tseng H.Y."/>
            <person name="Huang P.H."/>
            <person name="Shi G.Y."/>
            <person name="Wu H.L."/>
            <person name="Tang C.L."/>
            <person name="Chu P.H."/>
            <person name="Wang L.H."/>
            <person name="Wu K.K."/>
            <person name="Lin S.W."/>
        </authorList>
    </citation>
    <scope>DISRUPTION PHENOTYPE</scope>
</reference>